<name>ZIPA_ECO27</name>
<protein>
    <recommendedName>
        <fullName evidence="1">Cell division protein ZipA</fullName>
    </recommendedName>
</protein>
<sequence>MMQDLRLILIIVGAIAIIALLVHGFWTSRKERSSMFRDRPLKRMKSKRDDDSYDEDVEDDEGVGEVRVHRVNHAPANAQEHEVARPSPQHQYQPPYASAQPRQPVQQPPEAQVPPQHAPRPTQPVQQPVQQPAYQPQPEQPLQQPVSPQLASAPQPVHSAPQPAQQAFQPAEPVAAPQPEPVAEPAPVMDKPKRKEAVIIMNVAAHHGSELNGELLLNSIQQAGFIFGDMNIYHRHLSPDGSGPALFSLANMVKPGTFDPEMKDFTTPGVTIFMQVPSYGDELQNFKLMLQSAQHIADEVGGVVLDDQRRMMTPQKLREYQDIIREVKDANA</sequence>
<proteinExistence type="inferred from homology"/>
<organism>
    <name type="scientific">Escherichia coli O127:H6 (strain E2348/69 / EPEC)</name>
    <dbReference type="NCBI Taxonomy" id="574521"/>
    <lineage>
        <taxon>Bacteria</taxon>
        <taxon>Pseudomonadati</taxon>
        <taxon>Pseudomonadota</taxon>
        <taxon>Gammaproteobacteria</taxon>
        <taxon>Enterobacterales</taxon>
        <taxon>Enterobacteriaceae</taxon>
        <taxon>Escherichia</taxon>
    </lineage>
</organism>
<reference key="1">
    <citation type="journal article" date="2009" name="J. Bacteriol.">
        <title>Complete genome sequence and comparative genome analysis of enteropathogenic Escherichia coli O127:H6 strain E2348/69.</title>
        <authorList>
            <person name="Iguchi A."/>
            <person name="Thomson N.R."/>
            <person name="Ogura Y."/>
            <person name="Saunders D."/>
            <person name="Ooka T."/>
            <person name="Henderson I.R."/>
            <person name="Harris D."/>
            <person name="Asadulghani M."/>
            <person name="Kurokawa K."/>
            <person name="Dean P."/>
            <person name="Kenny B."/>
            <person name="Quail M.A."/>
            <person name="Thurston S."/>
            <person name="Dougan G."/>
            <person name="Hayashi T."/>
            <person name="Parkhill J."/>
            <person name="Frankel G."/>
        </authorList>
    </citation>
    <scope>NUCLEOTIDE SEQUENCE [LARGE SCALE GENOMIC DNA]</scope>
    <source>
        <strain>E2348/69 / EPEC</strain>
    </source>
</reference>
<accession>B7UGB3</accession>
<keyword id="KW-0131">Cell cycle</keyword>
<keyword id="KW-0132">Cell division</keyword>
<keyword id="KW-0997">Cell inner membrane</keyword>
<keyword id="KW-1003">Cell membrane</keyword>
<keyword id="KW-0472">Membrane</keyword>
<keyword id="KW-1185">Reference proteome</keyword>
<keyword id="KW-0812">Transmembrane</keyword>
<keyword id="KW-1133">Transmembrane helix</keyword>
<comment type="function">
    <text evidence="1">Essential cell division protein that stabilizes the FtsZ protofilaments by cross-linking them and that serves as a cytoplasmic membrane anchor for the Z ring. Also required for the recruitment to the septal ring of downstream cell division proteins.</text>
</comment>
<comment type="subunit">
    <text evidence="1">Interacts with FtsZ via their C-terminal domains.</text>
</comment>
<comment type="subcellular location">
    <subcellularLocation>
        <location evidence="1">Cell inner membrane</location>
        <topology evidence="1">Single-pass type I membrane protein</topology>
    </subcellularLocation>
    <text evidence="1">Localizes to the Z ring in an FtsZ-dependent manner.</text>
</comment>
<comment type="similarity">
    <text evidence="1">Belongs to the ZipA family.</text>
</comment>
<dbReference type="EMBL" id="FM180568">
    <property type="protein sequence ID" value="CAS10146.1"/>
    <property type="molecule type" value="Genomic_DNA"/>
</dbReference>
<dbReference type="RefSeq" id="WP_001339828.1">
    <property type="nucleotide sequence ID" value="NC_011601.1"/>
</dbReference>
<dbReference type="SMR" id="B7UGB3"/>
<dbReference type="KEGG" id="ecg:E2348C_2598"/>
<dbReference type="HOGENOM" id="CLU_030174_1_0_6"/>
<dbReference type="Proteomes" id="UP000008205">
    <property type="component" value="Chromosome"/>
</dbReference>
<dbReference type="GO" id="GO:0032153">
    <property type="term" value="C:cell division site"/>
    <property type="evidence" value="ECO:0007669"/>
    <property type="project" value="UniProtKB-UniRule"/>
</dbReference>
<dbReference type="GO" id="GO:0005886">
    <property type="term" value="C:plasma membrane"/>
    <property type="evidence" value="ECO:0007669"/>
    <property type="project" value="UniProtKB-SubCell"/>
</dbReference>
<dbReference type="GO" id="GO:0000917">
    <property type="term" value="P:division septum assembly"/>
    <property type="evidence" value="ECO:0007669"/>
    <property type="project" value="TreeGrafter"/>
</dbReference>
<dbReference type="GO" id="GO:0043093">
    <property type="term" value="P:FtsZ-dependent cytokinesis"/>
    <property type="evidence" value="ECO:0007669"/>
    <property type="project" value="UniProtKB-UniRule"/>
</dbReference>
<dbReference type="CDD" id="cd00231">
    <property type="entry name" value="ZipA"/>
    <property type="match status" value="1"/>
</dbReference>
<dbReference type="FunFam" id="3.30.1400.10:FF:000001">
    <property type="entry name" value="Cell division protein ZipA"/>
    <property type="match status" value="1"/>
</dbReference>
<dbReference type="Gene3D" id="3.30.1400.10">
    <property type="entry name" value="ZipA, C-terminal FtsZ-binding domain"/>
    <property type="match status" value="1"/>
</dbReference>
<dbReference type="HAMAP" id="MF_00509">
    <property type="entry name" value="ZipA"/>
    <property type="match status" value="1"/>
</dbReference>
<dbReference type="InterPro" id="IPR011919">
    <property type="entry name" value="Cell_div_ZipA"/>
</dbReference>
<dbReference type="InterPro" id="IPR007449">
    <property type="entry name" value="ZipA_FtsZ-bd_C"/>
</dbReference>
<dbReference type="InterPro" id="IPR036765">
    <property type="entry name" value="ZipA_FtsZ-bd_C_sf"/>
</dbReference>
<dbReference type="NCBIfam" id="TIGR02205">
    <property type="entry name" value="septum_zipA"/>
    <property type="match status" value="1"/>
</dbReference>
<dbReference type="PANTHER" id="PTHR38685">
    <property type="entry name" value="CELL DIVISION PROTEIN ZIPA"/>
    <property type="match status" value="1"/>
</dbReference>
<dbReference type="PANTHER" id="PTHR38685:SF1">
    <property type="entry name" value="CELL DIVISION PROTEIN ZIPA"/>
    <property type="match status" value="1"/>
</dbReference>
<dbReference type="Pfam" id="PF04354">
    <property type="entry name" value="ZipA_C"/>
    <property type="match status" value="1"/>
</dbReference>
<dbReference type="SMART" id="SM00771">
    <property type="entry name" value="ZipA_C"/>
    <property type="match status" value="1"/>
</dbReference>
<dbReference type="SUPFAM" id="SSF64383">
    <property type="entry name" value="Cell-division protein ZipA, C-terminal domain"/>
    <property type="match status" value="1"/>
</dbReference>
<feature type="chain" id="PRO_1000200693" description="Cell division protein ZipA">
    <location>
        <begin position="1"/>
        <end position="332"/>
    </location>
</feature>
<feature type="topological domain" description="Periplasmic" evidence="1">
    <location>
        <begin position="1"/>
        <end position="6"/>
    </location>
</feature>
<feature type="transmembrane region" description="Helical" evidence="1">
    <location>
        <begin position="7"/>
        <end position="27"/>
    </location>
</feature>
<feature type="topological domain" description="Cytoplasmic" evidence="1">
    <location>
        <begin position="28"/>
        <end position="332"/>
    </location>
</feature>
<feature type="region of interest" description="Disordered" evidence="2">
    <location>
        <begin position="42"/>
        <end position="190"/>
    </location>
</feature>
<feature type="compositionally biased region" description="Acidic residues" evidence="2">
    <location>
        <begin position="51"/>
        <end position="63"/>
    </location>
</feature>
<feature type="compositionally biased region" description="Low complexity" evidence="2">
    <location>
        <begin position="99"/>
        <end position="115"/>
    </location>
</feature>
<feature type="compositionally biased region" description="Low complexity" evidence="2">
    <location>
        <begin position="123"/>
        <end position="149"/>
    </location>
</feature>
<feature type="compositionally biased region" description="Low complexity" evidence="2">
    <location>
        <begin position="160"/>
        <end position="175"/>
    </location>
</feature>
<gene>
    <name evidence="1" type="primary">zipA</name>
    <name type="ordered locus">E2348C_2598</name>
</gene>
<evidence type="ECO:0000255" key="1">
    <source>
        <dbReference type="HAMAP-Rule" id="MF_00509"/>
    </source>
</evidence>
<evidence type="ECO:0000256" key="2">
    <source>
        <dbReference type="SAM" id="MobiDB-lite"/>
    </source>
</evidence>